<keyword id="KW-0238">DNA-binding</keyword>
<keyword id="KW-1185">Reference proteome</keyword>
<keyword id="KW-0678">Repressor</keyword>
<keyword id="KW-0804">Transcription</keyword>
<keyword id="KW-0805">Transcription regulation</keyword>
<sequence length="195" mass="21790">MPKLGMQSIRRRQLIDATLEAINEVGMHDATIAQIARRAGVSTGIISHYFRDKNGLLEATMRDITSQLRDAVLNRLHALPQGSAEQRLQAIVGGNFDETQVSSAAMKAWLAFWASSMHQPMLYRLQQVSSRRLLSNLVSEFRRELPRQQAQEAGYGLAALIDGLWLRAALSGKPLDKPLAHSLTRHFITQHLPTD</sequence>
<reference key="1">
    <citation type="journal article" date="2009" name="PLoS Genet.">
        <title>Organised genome dynamics in the Escherichia coli species results in highly diverse adaptive paths.</title>
        <authorList>
            <person name="Touchon M."/>
            <person name="Hoede C."/>
            <person name="Tenaillon O."/>
            <person name="Barbe V."/>
            <person name="Baeriswyl S."/>
            <person name="Bidet P."/>
            <person name="Bingen E."/>
            <person name="Bonacorsi S."/>
            <person name="Bouchier C."/>
            <person name="Bouvet O."/>
            <person name="Calteau A."/>
            <person name="Chiapello H."/>
            <person name="Clermont O."/>
            <person name="Cruveiller S."/>
            <person name="Danchin A."/>
            <person name="Diard M."/>
            <person name="Dossat C."/>
            <person name="Karoui M.E."/>
            <person name="Frapy E."/>
            <person name="Garry L."/>
            <person name="Ghigo J.M."/>
            <person name="Gilles A.M."/>
            <person name="Johnson J."/>
            <person name="Le Bouguenec C."/>
            <person name="Lescat M."/>
            <person name="Mangenot S."/>
            <person name="Martinez-Jehanne V."/>
            <person name="Matic I."/>
            <person name="Nassif X."/>
            <person name="Oztas S."/>
            <person name="Petit M.A."/>
            <person name="Pichon C."/>
            <person name="Rouy Z."/>
            <person name="Ruf C.S."/>
            <person name="Schneider D."/>
            <person name="Tourret J."/>
            <person name="Vacherie B."/>
            <person name="Vallenet D."/>
            <person name="Medigue C."/>
            <person name="Rocha E.P.C."/>
            <person name="Denamur E."/>
        </authorList>
    </citation>
    <scope>NUCLEOTIDE SEQUENCE [LARGE SCALE GENOMIC DNA]</scope>
    <source>
        <strain>55989 / EAEC</strain>
    </source>
</reference>
<protein>
    <recommendedName>
        <fullName evidence="2">HTH-type transcriptional regulator BetI</fullName>
    </recommendedName>
</protein>
<gene>
    <name evidence="2" type="primary">betI</name>
    <name type="ordered locus">EC55989_0315</name>
</gene>
<dbReference type="EMBL" id="CU928145">
    <property type="protein sequence ID" value="CAU96192.1"/>
    <property type="molecule type" value="Genomic_DNA"/>
</dbReference>
<dbReference type="RefSeq" id="WP_001295527.1">
    <property type="nucleotide sequence ID" value="NC_011748.1"/>
</dbReference>
<dbReference type="SMR" id="B7L442"/>
<dbReference type="GeneID" id="75206485"/>
<dbReference type="KEGG" id="eck:EC55989_0315"/>
<dbReference type="HOGENOM" id="CLU_069356_15_4_6"/>
<dbReference type="UniPathway" id="UPA00529"/>
<dbReference type="Proteomes" id="UP000000746">
    <property type="component" value="Chromosome"/>
</dbReference>
<dbReference type="GO" id="GO:0003700">
    <property type="term" value="F:DNA-binding transcription factor activity"/>
    <property type="evidence" value="ECO:0007669"/>
    <property type="project" value="UniProtKB-UniRule"/>
</dbReference>
<dbReference type="GO" id="GO:0000976">
    <property type="term" value="F:transcription cis-regulatory region binding"/>
    <property type="evidence" value="ECO:0007669"/>
    <property type="project" value="TreeGrafter"/>
</dbReference>
<dbReference type="GO" id="GO:0019285">
    <property type="term" value="P:glycine betaine biosynthetic process from choline"/>
    <property type="evidence" value="ECO:0007669"/>
    <property type="project" value="UniProtKB-UniRule"/>
</dbReference>
<dbReference type="GO" id="GO:0045892">
    <property type="term" value="P:negative regulation of DNA-templated transcription"/>
    <property type="evidence" value="ECO:0007669"/>
    <property type="project" value="UniProtKB-UniRule"/>
</dbReference>
<dbReference type="FunFam" id="1.10.357.10:FF:000009">
    <property type="entry name" value="HTH-type transcriptional regulator BetI"/>
    <property type="match status" value="1"/>
</dbReference>
<dbReference type="Gene3D" id="1.10.357.10">
    <property type="entry name" value="Tetracycline Repressor, domain 2"/>
    <property type="match status" value="1"/>
</dbReference>
<dbReference type="HAMAP" id="MF_00768">
    <property type="entry name" value="HTH_type_BetI"/>
    <property type="match status" value="1"/>
</dbReference>
<dbReference type="InterPro" id="IPR039538">
    <property type="entry name" value="BetI_C"/>
</dbReference>
<dbReference type="InterPro" id="IPR023772">
    <property type="entry name" value="DNA-bd_HTH_TetR-type_CS"/>
</dbReference>
<dbReference type="InterPro" id="IPR009057">
    <property type="entry name" value="Homeodomain-like_sf"/>
</dbReference>
<dbReference type="InterPro" id="IPR050109">
    <property type="entry name" value="HTH-type_TetR-like_transc_reg"/>
</dbReference>
<dbReference type="InterPro" id="IPR001647">
    <property type="entry name" value="HTH_TetR"/>
</dbReference>
<dbReference type="InterPro" id="IPR036271">
    <property type="entry name" value="Tet_transcr_reg_TetR-rel_C_sf"/>
</dbReference>
<dbReference type="InterPro" id="IPR017757">
    <property type="entry name" value="Tscrpt_rep_BetI"/>
</dbReference>
<dbReference type="NCBIfam" id="TIGR03384">
    <property type="entry name" value="betaine_BetI"/>
    <property type="match status" value="1"/>
</dbReference>
<dbReference type="NCBIfam" id="NF001978">
    <property type="entry name" value="PRK00767.1"/>
    <property type="match status" value="1"/>
</dbReference>
<dbReference type="PANTHER" id="PTHR30055:SF234">
    <property type="entry name" value="HTH-TYPE TRANSCRIPTIONAL REGULATOR BETI"/>
    <property type="match status" value="1"/>
</dbReference>
<dbReference type="PANTHER" id="PTHR30055">
    <property type="entry name" value="HTH-TYPE TRANSCRIPTIONAL REGULATOR RUTR"/>
    <property type="match status" value="1"/>
</dbReference>
<dbReference type="Pfam" id="PF13977">
    <property type="entry name" value="TetR_C_6"/>
    <property type="match status" value="1"/>
</dbReference>
<dbReference type="Pfam" id="PF00440">
    <property type="entry name" value="TetR_N"/>
    <property type="match status" value="1"/>
</dbReference>
<dbReference type="PRINTS" id="PR00455">
    <property type="entry name" value="HTHTETR"/>
</dbReference>
<dbReference type="SUPFAM" id="SSF46689">
    <property type="entry name" value="Homeodomain-like"/>
    <property type="match status" value="1"/>
</dbReference>
<dbReference type="SUPFAM" id="SSF48498">
    <property type="entry name" value="Tetracyclin repressor-like, C-terminal domain"/>
    <property type="match status" value="1"/>
</dbReference>
<dbReference type="PROSITE" id="PS01081">
    <property type="entry name" value="HTH_TETR_1"/>
    <property type="match status" value="1"/>
</dbReference>
<dbReference type="PROSITE" id="PS50977">
    <property type="entry name" value="HTH_TETR_2"/>
    <property type="match status" value="1"/>
</dbReference>
<evidence type="ECO:0000250" key="1"/>
<evidence type="ECO:0000255" key="2">
    <source>
        <dbReference type="HAMAP-Rule" id="MF_00768"/>
    </source>
</evidence>
<proteinExistence type="inferred from homology"/>
<name>BETI_ECO55</name>
<accession>B7L442</accession>
<organism>
    <name type="scientific">Escherichia coli (strain 55989 / EAEC)</name>
    <dbReference type="NCBI Taxonomy" id="585055"/>
    <lineage>
        <taxon>Bacteria</taxon>
        <taxon>Pseudomonadati</taxon>
        <taxon>Pseudomonadota</taxon>
        <taxon>Gammaproteobacteria</taxon>
        <taxon>Enterobacterales</taxon>
        <taxon>Enterobacteriaceae</taxon>
        <taxon>Escherichia</taxon>
    </lineage>
</organism>
<feature type="chain" id="PRO_1000148446" description="HTH-type transcriptional regulator BetI">
    <location>
        <begin position="1"/>
        <end position="195"/>
    </location>
</feature>
<feature type="domain" description="HTH tetR-type" evidence="2">
    <location>
        <begin position="8"/>
        <end position="68"/>
    </location>
</feature>
<feature type="DNA-binding region" description="H-T-H motif" evidence="2">
    <location>
        <begin position="31"/>
        <end position="50"/>
    </location>
</feature>
<comment type="function">
    <text evidence="1">Repressor involved in the biosynthesis of the osmoprotectant glycine betaine. It represses transcription of the choline transporter BetT and the genes of BetAB involved in the synthesis of glycine betaine (By similarity).</text>
</comment>
<comment type="pathway">
    <text>Amine and polyamine biosynthesis; betaine biosynthesis via choline pathway [regulation].</text>
</comment>